<feature type="chain" id="PRO_0000104407" description="Large ribosomal subunit protein uL11">
    <location>
        <begin position="1"/>
        <end position="142"/>
    </location>
</feature>
<keyword id="KW-0488">Methylation</keyword>
<keyword id="KW-1185">Reference proteome</keyword>
<keyword id="KW-0687">Ribonucleoprotein</keyword>
<keyword id="KW-0689">Ribosomal protein</keyword>
<keyword id="KW-0694">RNA-binding</keyword>
<keyword id="KW-0699">rRNA-binding</keyword>
<accession>Q9KV34</accession>
<sequence>MAKKVEAYVKLQVAAGMANPSPPVGPALGQRGVNIMEFCKAFNARTESLEKGLPIPVVITVYSDRSFTFETKTPPASVLLKKAAGIKSGSARPNTAKVGTITDAQIQEIAATKAADMTGADIEAMKRSIAGTARSMGLVVEG</sequence>
<protein>
    <recommendedName>
        <fullName evidence="1">Large ribosomal subunit protein uL11</fullName>
    </recommendedName>
    <alternativeName>
        <fullName evidence="2">50S ribosomal protein L11</fullName>
    </alternativeName>
</protein>
<name>RL11_VIBCH</name>
<comment type="function">
    <text evidence="1">Forms part of the ribosomal stalk which helps the ribosome interact with GTP-bound translation factors.</text>
</comment>
<comment type="subunit">
    <text evidence="1">Part of the ribosomal stalk of the 50S ribosomal subunit. Interacts with L10 and the large rRNA to form the base of the stalk. L10 forms an elongated spine to which L12 dimers bind in a sequential fashion forming a multimeric L10(L12)X complex.</text>
</comment>
<comment type="PTM">
    <text evidence="1">One or more lysine residues are methylated.</text>
</comment>
<comment type="similarity">
    <text evidence="1">Belongs to the universal ribosomal protein uL11 family.</text>
</comment>
<proteinExistence type="inferred from homology"/>
<reference key="1">
    <citation type="journal article" date="2000" name="Nature">
        <title>DNA sequence of both chromosomes of the cholera pathogen Vibrio cholerae.</title>
        <authorList>
            <person name="Heidelberg J.F."/>
            <person name="Eisen J.A."/>
            <person name="Nelson W.C."/>
            <person name="Clayton R.A."/>
            <person name="Gwinn M.L."/>
            <person name="Dodson R.J."/>
            <person name="Haft D.H."/>
            <person name="Hickey E.K."/>
            <person name="Peterson J.D."/>
            <person name="Umayam L.A."/>
            <person name="Gill S.R."/>
            <person name="Nelson K.E."/>
            <person name="Read T.D."/>
            <person name="Tettelin H."/>
            <person name="Richardson D.L."/>
            <person name="Ermolaeva M.D."/>
            <person name="Vamathevan J.J."/>
            <person name="Bass S."/>
            <person name="Qin H."/>
            <person name="Dragoi I."/>
            <person name="Sellers P."/>
            <person name="McDonald L.A."/>
            <person name="Utterback T.R."/>
            <person name="Fleischmann R.D."/>
            <person name="Nierman W.C."/>
            <person name="White O."/>
            <person name="Salzberg S.L."/>
            <person name="Smith H.O."/>
            <person name="Colwell R.R."/>
            <person name="Mekalanos J.J."/>
            <person name="Venter J.C."/>
            <person name="Fraser C.M."/>
        </authorList>
    </citation>
    <scope>NUCLEOTIDE SEQUENCE [LARGE SCALE GENOMIC DNA]</scope>
    <source>
        <strain>ATCC 39315 / El Tor Inaba N16961</strain>
    </source>
</reference>
<dbReference type="EMBL" id="AE003852">
    <property type="protein sequence ID" value="AAF93497.1"/>
    <property type="molecule type" value="Genomic_DNA"/>
</dbReference>
<dbReference type="PIR" id="B82338">
    <property type="entry name" value="B82338"/>
</dbReference>
<dbReference type="RefSeq" id="NP_229978.1">
    <property type="nucleotide sequence ID" value="NC_002505.1"/>
</dbReference>
<dbReference type="RefSeq" id="WP_001085796.1">
    <property type="nucleotide sequence ID" value="NZ_LT906614.1"/>
</dbReference>
<dbReference type="SMR" id="Q9KV34"/>
<dbReference type="STRING" id="243277.VC_0324"/>
<dbReference type="DNASU" id="2615090"/>
<dbReference type="EnsemblBacteria" id="AAF93497">
    <property type="protein sequence ID" value="AAF93497"/>
    <property type="gene ID" value="VC_0324"/>
</dbReference>
<dbReference type="GeneID" id="88783729"/>
<dbReference type="KEGG" id="vch:VC_0324"/>
<dbReference type="PATRIC" id="fig|243277.26.peg.301"/>
<dbReference type="eggNOG" id="COG0080">
    <property type="taxonomic scope" value="Bacteria"/>
</dbReference>
<dbReference type="HOGENOM" id="CLU_074237_2_0_6"/>
<dbReference type="Proteomes" id="UP000000584">
    <property type="component" value="Chromosome 1"/>
</dbReference>
<dbReference type="GO" id="GO:0022625">
    <property type="term" value="C:cytosolic large ribosomal subunit"/>
    <property type="evidence" value="ECO:0000318"/>
    <property type="project" value="GO_Central"/>
</dbReference>
<dbReference type="GO" id="GO:0070180">
    <property type="term" value="F:large ribosomal subunit rRNA binding"/>
    <property type="evidence" value="ECO:0000318"/>
    <property type="project" value="GO_Central"/>
</dbReference>
<dbReference type="GO" id="GO:0003735">
    <property type="term" value="F:structural constituent of ribosome"/>
    <property type="evidence" value="ECO:0000318"/>
    <property type="project" value="GO_Central"/>
</dbReference>
<dbReference type="GO" id="GO:0006412">
    <property type="term" value="P:translation"/>
    <property type="evidence" value="ECO:0000318"/>
    <property type="project" value="GO_Central"/>
</dbReference>
<dbReference type="CDD" id="cd00349">
    <property type="entry name" value="Ribosomal_L11"/>
    <property type="match status" value="1"/>
</dbReference>
<dbReference type="FunFam" id="1.10.10.250:FF:000001">
    <property type="entry name" value="50S ribosomal protein L11"/>
    <property type="match status" value="1"/>
</dbReference>
<dbReference type="FunFam" id="3.30.1550.10:FF:000001">
    <property type="entry name" value="50S ribosomal protein L11"/>
    <property type="match status" value="1"/>
</dbReference>
<dbReference type="Gene3D" id="1.10.10.250">
    <property type="entry name" value="Ribosomal protein L11, C-terminal domain"/>
    <property type="match status" value="1"/>
</dbReference>
<dbReference type="Gene3D" id="3.30.1550.10">
    <property type="entry name" value="Ribosomal protein L11/L12, N-terminal domain"/>
    <property type="match status" value="1"/>
</dbReference>
<dbReference type="HAMAP" id="MF_00736">
    <property type="entry name" value="Ribosomal_uL11"/>
    <property type="match status" value="1"/>
</dbReference>
<dbReference type="InterPro" id="IPR000911">
    <property type="entry name" value="Ribosomal_uL11"/>
</dbReference>
<dbReference type="InterPro" id="IPR006519">
    <property type="entry name" value="Ribosomal_uL11_bac-typ"/>
</dbReference>
<dbReference type="InterPro" id="IPR020783">
    <property type="entry name" value="Ribosomal_uL11_C"/>
</dbReference>
<dbReference type="InterPro" id="IPR036769">
    <property type="entry name" value="Ribosomal_uL11_C_sf"/>
</dbReference>
<dbReference type="InterPro" id="IPR020785">
    <property type="entry name" value="Ribosomal_uL11_CS"/>
</dbReference>
<dbReference type="InterPro" id="IPR020784">
    <property type="entry name" value="Ribosomal_uL11_N"/>
</dbReference>
<dbReference type="InterPro" id="IPR036796">
    <property type="entry name" value="Ribosomal_uL11_N_sf"/>
</dbReference>
<dbReference type="NCBIfam" id="TIGR01632">
    <property type="entry name" value="L11_bact"/>
    <property type="match status" value="1"/>
</dbReference>
<dbReference type="PANTHER" id="PTHR11661">
    <property type="entry name" value="60S RIBOSOMAL PROTEIN L12"/>
    <property type="match status" value="1"/>
</dbReference>
<dbReference type="PANTHER" id="PTHR11661:SF1">
    <property type="entry name" value="LARGE RIBOSOMAL SUBUNIT PROTEIN UL11M"/>
    <property type="match status" value="1"/>
</dbReference>
<dbReference type="Pfam" id="PF00298">
    <property type="entry name" value="Ribosomal_L11"/>
    <property type="match status" value="1"/>
</dbReference>
<dbReference type="Pfam" id="PF03946">
    <property type="entry name" value="Ribosomal_L11_N"/>
    <property type="match status" value="1"/>
</dbReference>
<dbReference type="SMART" id="SM00649">
    <property type="entry name" value="RL11"/>
    <property type="match status" value="1"/>
</dbReference>
<dbReference type="SUPFAM" id="SSF54747">
    <property type="entry name" value="Ribosomal L11/L12e N-terminal domain"/>
    <property type="match status" value="1"/>
</dbReference>
<dbReference type="SUPFAM" id="SSF46906">
    <property type="entry name" value="Ribosomal protein L11, C-terminal domain"/>
    <property type="match status" value="1"/>
</dbReference>
<dbReference type="PROSITE" id="PS00359">
    <property type="entry name" value="RIBOSOMAL_L11"/>
    <property type="match status" value="1"/>
</dbReference>
<gene>
    <name evidence="1" type="primary">rplK</name>
    <name type="ordered locus">VC_0324</name>
</gene>
<evidence type="ECO:0000255" key="1">
    <source>
        <dbReference type="HAMAP-Rule" id="MF_00736"/>
    </source>
</evidence>
<evidence type="ECO:0000305" key="2"/>
<organism>
    <name type="scientific">Vibrio cholerae serotype O1 (strain ATCC 39315 / El Tor Inaba N16961)</name>
    <dbReference type="NCBI Taxonomy" id="243277"/>
    <lineage>
        <taxon>Bacteria</taxon>
        <taxon>Pseudomonadati</taxon>
        <taxon>Pseudomonadota</taxon>
        <taxon>Gammaproteobacteria</taxon>
        <taxon>Vibrionales</taxon>
        <taxon>Vibrionaceae</taxon>
        <taxon>Vibrio</taxon>
    </lineage>
</organism>